<feature type="chain" id="PRO_0000314756" description="DIS3-like exonuclease 2">
    <location>
        <begin position="1"/>
        <end position="927"/>
    </location>
</feature>
<feature type="region of interest" description="Disordered" evidence="2">
    <location>
        <begin position="1"/>
        <end position="168"/>
    </location>
</feature>
<feature type="compositionally biased region" description="Basic residues" evidence="2">
    <location>
        <begin position="1"/>
        <end position="12"/>
    </location>
</feature>
<feature type="compositionally biased region" description="Basic and acidic residues" evidence="2">
    <location>
        <begin position="13"/>
        <end position="31"/>
    </location>
</feature>
<feature type="compositionally biased region" description="Basic residues" evidence="2">
    <location>
        <begin position="97"/>
        <end position="106"/>
    </location>
</feature>
<feature type="compositionally biased region" description="Basic and acidic residues" evidence="2">
    <location>
        <begin position="107"/>
        <end position="152"/>
    </location>
</feature>
<feature type="compositionally biased region" description="Polar residues" evidence="2">
    <location>
        <begin position="153"/>
        <end position="168"/>
    </location>
</feature>
<feature type="binding site" evidence="1">
    <location>
        <position position="453"/>
    </location>
    <ligand>
        <name>Mg(2+)</name>
        <dbReference type="ChEBI" id="CHEBI:18420"/>
    </ligand>
</feature>
<feature type="binding site" evidence="1">
    <location>
        <position position="462"/>
    </location>
    <ligand>
        <name>Mg(2+)</name>
        <dbReference type="ChEBI" id="CHEBI:18420"/>
    </ligand>
</feature>
<feature type="site" description="Important for catalytic activity" evidence="1">
    <location>
        <position position="461"/>
    </location>
</feature>
<feature type="mutagenesis site" description="Loss of exoribonuclease activity." evidence="3">
    <original>D</original>
    <variation>N</variation>
    <location>
        <position position="461"/>
    </location>
</feature>
<feature type="strand" evidence="4">
    <location>
        <begin position="332"/>
        <end position="335"/>
    </location>
</feature>
<feature type="strand" evidence="4">
    <location>
        <begin position="345"/>
        <end position="348"/>
    </location>
</feature>
<feature type="strand" evidence="4">
    <location>
        <begin position="351"/>
        <end position="355"/>
    </location>
</feature>
<feature type="helix" evidence="4">
    <location>
        <begin position="360"/>
        <end position="363"/>
    </location>
</feature>
<feature type="turn" evidence="4">
    <location>
        <begin position="364"/>
        <end position="369"/>
    </location>
</feature>
<feature type="strand" evidence="4">
    <location>
        <begin position="372"/>
        <end position="376"/>
    </location>
</feature>
<feature type="strand" evidence="4">
    <location>
        <begin position="387"/>
        <end position="393"/>
    </location>
</feature>
<feature type="helix" evidence="4">
    <location>
        <begin position="395"/>
        <end position="410"/>
    </location>
</feature>
<feature type="turn" evidence="4">
    <location>
        <begin position="420"/>
        <end position="424"/>
    </location>
</feature>
<feature type="helix" evidence="4">
    <location>
        <begin position="435"/>
        <end position="439"/>
    </location>
</feature>
<feature type="strand" evidence="4">
    <location>
        <begin position="441"/>
        <end position="443"/>
    </location>
</feature>
<feature type="strand" evidence="4">
    <location>
        <begin position="449"/>
        <end position="453"/>
    </location>
</feature>
<feature type="strand" evidence="4">
    <location>
        <begin position="462"/>
        <end position="468"/>
    </location>
</feature>
<feature type="strand" evidence="4">
    <location>
        <begin position="470"/>
        <end position="481"/>
    </location>
</feature>
<feature type="helix" evidence="4">
    <location>
        <begin position="483"/>
        <end position="485"/>
    </location>
</feature>
<feature type="helix" evidence="4">
    <location>
        <begin position="492"/>
        <end position="500"/>
    </location>
</feature>
<feature type="helix" evidence="4">
    <location>
        <begin position="516"/>
        <end position="519"/>
    </location>
</feature>
<feature type="turn" evidence="4">
    <location>
        <begin position="520"/>
        <end position="523"/>
    </location>
</feature>
<feature type="strand" evidence="4">
    <location>
        <begin position="531"/>
        <end position="541"/>
    </location>
</feature>
<feature type="strand" evidence="4">
    <location>
        <begin position="551"/>
        <end position="557"/>
    </location>
</feature>
<feature type="strand" evidence="4">
    <location>
        <begin position="561"/>
        <end position="564"/>
    </location>
</feature>
<feature type="helix" evidence="4">
    <location>
        <begin position="565"/>
        <end position="573"/>
    </location>
</feature>
<feature type="helix" evidence="4">
    <location>
        <begin position="577"/>
        <end position="580"/>
    </location>
</feature>
<feature type="helix" evidence="4">
    <location>
        <begin position="591"/>
        <end position="612"/>
    </location>
</feature>
<feature type="turn" evidence="4">
    <location>
        <begin position="613"/>
        <end position="616"/>
    </location>
</feature>
<feature type="strand" evidence="4">
    <location>
        <begin position="625"/>
        <end position="629"/>
    </location>
</feature>
<feature type="strand" evidence="4">
    <location>
        <begin position="635"/>
        <end position="640"/>
    </location>
</feature>
<feature type="helix" evidence="4">
    <location>
        <begin position="645"/>
        <end position="665"/>
    </location>
</feature>
<feature type="turn" evidence="4">
    <location>
        <begin position="666"/>
        <end position="668"/>
    </location>
</feature>
<feature type="strand" evidence="4">
    <location>
        <begin position="670"/>
        <end position="672"/>
    </location>
</feature>
<feature type="strand" evidence="4">
    <location>
        <begin position="674"/>
        <end position="678"/>
    </location>
</feature>
<feature type="turn" evidence="4">
    <location>
        <begin position="683"/>
        <end position="686"/>
    </location>
</feature>
<feature type="helix" evidence="4">
    <location>
        <begin position="687"/>
        <end position="695"/>
    </location>
</feature>
<feature type="helix" evidence="4">
    <location>
        <begin position="705"/>
        <end position="715"/>
    </location>
</feature>
<feature type="turn" evidence="4">
    <location>
        <begin position="716"/>
        <end position="718"/>
    </location>
</feature>
<feature type="helix" evidence="4">
    <location>
        <begin position="721"/>
        <end position="734"/>
    </location>
</feature>
<feature type="strand" evidence="4">
    <location>
        <begin position="739"/>
        <end position="742"/>
    </location>
</feature>
<feature type="helix" evidence="4">
    <location>
        <begin position="743"/>
        <end position="745"/>
    </location>
</feature>
<feature type="helix" evidence="4">
    <location>
        <begin position="749"/>
        <end position="751"/>
    </location>
</feature>
<feature type="turn" evidence="4">
    <location>
        <begin position="755"/>
        <end position="758"/>
    </location>
</feature>
<feature type="strand" evidence="4">
    <location>
        <begin position="759"/>
        <end position="761"/>
    </location>
</feature>
<feature type="turn" evidence="4">
    <location>
        <begin position="768"/>
        <end position="770"/>
    </location>
</feature>
<feature type="helix" evidence="4">
    <location>
        <begin position="773"/>
        <end position="783"/>
    </location>
</feature>
<feature type="turn" evidence="4">
    <location>
        <begin position="784"/>
        <end position="787"/>
    </location>
</feature>
<feature type="helix" evidence="4">
    <location>
        <begin position="794"/>
        <end position="831"/>
    </location>
</feature>
<feature type="strand" evidence="4">
    <location>
        <begin position="843"/>
        <end position="848"/>
    </location>
</feature>
<feature type="strand" evidence="4">
    <location>
        <begin position="853"/>
        <end position="857"/>
    </location>
</feature>
<feature type="helix" evidence="4">
    <location>
        <begin position="859"/>
        <end position="861"/>
    </location>
</feature>
<feature type="strand" evidence="4">
    <location>
        <begin position="862"/>
        <end position="866"/>
    </location>
</feature>
<feature type="strand" evidence="4">
    <location>
        <begin position="909"/>
        <end position="912"/>
    </location>
</feature>
<feature type="strand" evidence="4">
    <location>
        <begin position="917"/>
        <end position="920"/>
    </location>
</feature>
<gene>
    <name type="primary">dis32</name>
    <name type="synonym">dis3l2</name>
    <name type="ORF">SPAC2C4.07c</name>
</gene>
<dbReference type="EC" id="3.1.13.-" evidence="1"/>
<dbReference type="EMBL" id="CU329670">
    <property type="protein sequence ID" value="CAB16367.1"/>
    <property type="molecule type" value="Genomic_DNA"/>
</dbReference>
<dbReference type="EMBL" id="AB027825">
    <property type="protein sequence ID" value="BAA87129.1"/>
    <property type="molecule type" value="Genomic_DNA"/>
</dbReference>
<dbReference type="PIR" id="T38518">
    <property type="entry name" value="T38518"/>
</dbReference>
<dbReference type="RefSeq" id="NP_594510.1">
    <property type="nucleotide sequence ID" value="NM_001019939.2"/>
</dbReference>
<dbReference type="PDB" id="4RO1">
    <property type="method" value="X-ray"/>
    <property type="resolution" value="2.80 A"/>
    <property type="chains" value="A/B=170-927"/>
</dbReference>
<dbReference type="PDBsum" id="4RO1"/>
<dbReference type="SMR" id="O14040"/>
<dbReference type="BioGRID" id="279097">
    <property type="interactions" value="21"/>
</dbReference>
<dbReference type="FunCoup" id="O14040">
    <property type="interactions" value="515"/>
</dbReference>
<dbReference type="STRING" id="284812.O14040"/>
<dbReference type="iPTMnet" id="O14040"/>
<dbReference type="PaxDb" id="4896-SPAC2C4.07c.1"/>
<dbReference type="EnsemblFungi" id="SPAC2C4.07c.1">
    <property type="protein sequence ID" value="SPAC2C4.07c.1:pep"/>
    <property type="gene ID" value="SPAC2C4.07c"/>
</dbReference>
<dbReference type="GeneID" id="2542643"/>
<dbReference type="KEGG" id="spo:2542643"/>
<dbReference type="PomBase" id="SPAC2C4.07c">
    <property type="gene designation" value="dis32"/>
</dbReference>
<dbReference type="VEuPathDB" id="FungiDB:SPAC2C4.07c"/>
<dbReference type="eggNOG" id="KOG2102">
    <property type="taxonomic scope" value="Eukaryota"/>
</dbReference>
<dbReference type="HOGENOM" id="CLU_002333_5_2_1"/>
<dbReference type="InParanoid" id="O14040"/>
<dbReference type="OMA" id="AFLRCHP"/>
<dbReference type="PhylomeDB" id="O14040"/>
<dbReference type="EvolutionaryTrace" id="O14040"/>
<dbReference type="PRO" id="PR:O14040"/>
<dbReference type="Proteomes" id="UP000002485">
    <property type="component" value="Chromosome I"/>
</dbReference>
<dbReference type="GO" id="GO:0005737">
    <property type="term" value="C:cytoplasm"/>
    <property type="evidence" value="ECO:0000314"/>
    <property type="project" value="UniProtKB"/>
</dbReference>
<dbReference type="GO" id="GO:0005829">
    <property type="term" value="C:cytosol"/>
    <property type="evidence" value="ECO:0007005"/>
    <property type="project" value="PomBase"/>
</dbReference>
<dbReference type="GO" id="GO:0000932">
    <property type="term" value="C:P-body"/>
    <property type="evidence" value="ECO:0000314"/>
    <property type="project" value="UniProtKB"/>
</dbReference>
<dbReference type="GO" id="GO:0000175">
    <property type="term" value="F:3'-5'-RNA exonuclease activity"/>
    <property type="evidence" value="ECO:0000314"/>
    <property type="project" value="UniProtKB"/>
</dbReference>
<dbReference type="GO" id="GO:0046872">
    <property type="term" value="F:metal ion binding"/>
    <property type="evidence" value="ECO:0007669"/>
    <property type="project" value="UniProtKB-KW"/>
</dbReference>
<dbReference type="GO" id="GO:0008266">
    <property type="term" value="F:poly(U) RNA binding"/>
    <property type="evidence" value="ECO:0000314"/>
    <property type="project" value="PomBase"/>
</dbReference>
<dbReference type="GO" id="GO:0000956">
    <property type="term" value="P:nuclear-transcribed mRNA catabolic process"/>
    <property type="evidence" value="ECO:0000315"/>
    <property type="project" value="UniProtKB"/>
</dbReference>
<dbReference type="GO" id="GO:1990074">
    <property type="term" value="P:polyuridylation-dependent mRNA catabolic process"/>
    <property type="evidence" value="ECO:0000315"/>
    <property type="project" value="UniProtKB"/>
</dbReference>
<dbReference type="FunFam" id="2.40.50.700:FF:000003">
    <property type="entry name" value="DIS3-like exonuclease 2"/>
    <property type="match status" value="1"/>
</dbReference>
<dbReference type="Gene3D" id="2.40.50.690">
    <property type="match status" value="1"/>
</dbReference>
<dbReference type="Gene3D" id="2.40.50.700">
    <property type="match status" value="1"/>
</dbReference>
<dbReference type="HAMAP" id="MF_03045">
    <property type="entry name" value="DIS3L2"/>
    <property type="match status" value="1"/>
</dbReference>
<dbReference type="InterPro" id="IPR055232">
    <property type="entry name" value="Dis32-like_C"/>
</dbReference>
<dbReference type="InterPro" id="IPR041505">
    <property type="entry name" value="Dis3_CSD2"/>
</dbReference>
<dbReference type="InterPro" id="IPR028591">
    <property type="entry name" value="DIS3L2"/>
</dbReference>
<dbReference type="InterPro" id="IPR012340">
    <property type="entry name" value="NA-bd_OB-fold"/>
</dbReference>
<dbReference type="InterPro" id="IPR001900">
    <property type="entry name" value="RNase_II/R"/>
</dbReference>
<dbReference type="InterPro" id="IPR022966">
    <property type="entry name" value="RNase_II/R_CS"/>
</dbReference>
<dbReference type="InterPro" id="IPR050180">
    <property type="entry name" value="RNR_Ribonuclease"/>
</dbReference>
<dbReference type="PANTHER" id="PTHR23355:SF66">
    <property type="entry name" value="DIS3-LIKE EXONUCLEASE 2-RELATED"/>
    <property type="match status" value="1"/>
</dbReference>
<dbReference type="PANTHER" id="PTHR23355">
    <property type="entry name" value="RIBONUCLEASE"/>
    <property type="match status" value="1"/>
</dbReference>
<dbReference type="Pfam" id="PF22428">
    <property type="entry name" value="Dis32-like_C"/>
    <property type="match status" value="1"/>
</dbReference>
<dbReference type="Pfam" id="PF17849">
    <property type="entry name" value="OB_Dis3"/>
    <property type="match status" value="1"/>
</dbReference>
<dbReference type="Pfam" id="PF00773">
    <property type="entry name" value="RNB"/>
    <property type="match status" value="1"/>
</dbReference>
<dbReference type="SMART" id="SM00955">
    <property type="entry name" value="RNB"/>
    <property type="match status" value="1"/>
</dbReference>
<dbReference type="SUPFAM" id="SSF50249">
    <property type="entry name" value="Nucleic acid-binding proteins"/>
    <property type="match status" value="2"/>
</dbReference>
<dbReference type="PROSITE" id="PS01175">
    <property type="entry name" value="RIBONUCLEASE_II"/>
    <property type="match status" value="1"/>
</dbReference>
<name>DI3L2_SCHPO</name>
<accession>O14040</accession>
<accession>Q9USE3</accession>
<organism>
    <name type="scientific">Schizosaccharomyces pombe (strain 972 / ATCC 24843)</name>
    <name type="common">Fission yeast</name>
    <dbReference type="NCBI Taxonomy" id="284812"/>
    <lineage>
        <taxon>Eukaryota</taxon>
        <taxon>Fungi</taxon>
        <taxon>Dikarya</taxon>
        <taxon>Ascomycota</taxon>
        <taxon>Taphrinomycotina</taxon>
        <taxon>Schizosaccharomycetes</taxon>
        <taxon>Schizosaccharomycetales</taxon>
        <taxon>Schizosaccharomycetaceae</taxon>
        <taxon>Schizosaccharomyces</taxon>
    </lineage>
</organism>
<reference key="1">
    <citation type="journal article" date="2002" name="Nature">
        <title>The genome sequence of Schizosaccharomyces pombe.</title>
        <authorList>
            <person name="Wood V."/>
            <person name="Gwilliam R."/>
            <person name="Rajandream M.A."/>
            <person name="Lyne M.H."/>
            <person name="Lyne R."/>
            <person name="Stewart A."/>
            <person name="Sgouros J.G."/>
            <person name="Peat N."/>
            <person name="Hayles J."/>
            <person name="Baker S.G."/>
            <person name="Basham D."/>
            <person name="Bowman S."/>
            <person name="Brooks K."/>
            <person name="Brown D."/>
            <person name="Brown S."/>
            <person name="Chillingworth T."/>
            <person name="Churcher C.M."/>
            <person name="Collins M."/>
            <person name="Connor R."/>
            <person name="Cronin A."/>
            <person name="Davis P."/>
            <person name="Feltwell T."/>
            <person name="Fraser A."/>
            <person name="Gentles S."/>
            <person name="Goble A."/>
            <person name="Hamlin N."/>
            <person name="Harris D.E."/>
            <person name="Hidalgo J."/>
            <person name="Hodgson G."/>
            <person name="Holroyd S."/>
            <person name="Hornsby T."/>
            <person name="Howarth S."/>
            <person name="Huckle E.J."/>
            <person name="Hunt S."/>
            <person name="Jagels K."/>
            <person name="James K.D."/>
            <person name="Jones L."/>
            <person name="Jones M."/>
            <person name="Leather S."/>
            <person name="McDonald S."/>
            <person name="McLean J."/>
            <person name="Mooney P."/>
            <person name="Moule S."/>
            <person name="Mungall K.L."/>
            <person name="Murphy L.D."/>
            <person name="Niblett D."/>
            <person name="Odell C."/>
            <person name="Oliver K."/>
            <person name="O'Neil S."/>
            <person name="Pearson D."/>
            <person name="Quail M.A."/>
            <person name="Rabbinowitsch E."/>
            <person name="Rutherford K.M."/>
            <person name="Rutter S."/>
            <person name="Saunders D."/>
            <person name="Seeger K."/>
            <person name="Sharp S."/>
            <person name="Skelton J."/>
            <person name="Simmonds M.N."/>
            <person name="Squares R."/>
            <person name="Squares S."/>
            <person name="Stevens K."/>
            <person name="Taylor K."/>
            <person name="Taylor R.G."/>
            <person name="Tivey A."/>
            <person name="Walsh S.V."/>
            <person name="Warren T."/>
            <person name="Whitehead S."/>
            <person name="Woodward J.R."/>
            <person name="Volckaert G."/>
            <person name="Aert R."/>
            <person name="Robben J."/>
            <person name="Grymonprez B."/>
            <person name="Weltjens I."/>
            <person name="Vanstreels E."/>
            <person name="Rieger M."/>
            <person name="Schaefer M."/>
            <person name="Mueller-Auer S."/>
            <person name="Gabel C."/>
            <person name="Fuchs M."/>
            <person name="Duesterhoeft A."/>
            <person name="Fritzc C."/>
            <person name="Holzer E."/>
            <person name="Moestl D."/>
            <person name="Hilbert H."/>
            <person name="Borzym K."/>
            <person name="Langer I."/>
            <person name="Beck A."/>
            <person name="Lehrach H."/>
            <person name="Reinhardt R."/>
            <person name="Pohl T.M."/>
            <person name="Eger P."/>
            <person name="Zimmermann W."/>
            <person name="Wedler H."/>
            <person name="Wambutt R."/>
            <person name="Purnelle B."/>
            <person name="Goffeau A."/>
            <person name="Cadieu E."/>
            <person name="Dreano S."/>
            <person name="Gloux S."/>
            <person name="Lelaure V."/>
            <person name="Mottier S."/>
            <person name="Galibert F."/>
            <person name="Aves S.J."/>
            <person name="Xiang Z."/>
            <person name="Hunt C."/>
            <person name="Moore K."/>
            <person name="Hurst S.M."/>
            <person name="Lucas M."/>
            <person name="Rochet M."/>
            <person name="Gaillardin C."/>
            <person name="Tallada V.A."/>
            <person name="Garzon A."/>
            <person name="Thode G."/>
            <person name="Daga R.R."/>
            <person name="Cruzado L."/>
            <person name="Jimenez J."/>
            <person name="Sanchez M."/>
            <person name="del Rey F."/>
            <person name="Benito J."/>
            <person name="Dominguez A."/>
            <person name="Revuelta J.L."/>
            <person name="Moreno S."/>
            <person name="Armstrong J."/>
            <person name="Forsburg S.L."/>
            <person name="Cerutti L."/>
            <person name="Lowe T."/>
            <person name="McCombie W.R."/>
            <person name="Paulsen I."/>
            <person name="Potashkin J."/>
            <person name="Shpakovski G.V."/>
            <person name="Ussery D."/>
            <person name="Barrell B.G."/>
            <person name="Nurse P."/>
        </authorList>
    </citation>
    <scope>NUCLEOTIDE SEQUENCE [LARGE SCALE GENOMIC DNA]</scope>
    <source>
        <strain>972 / ATCC 24843</strain>
    </source>
</reference>
<reference key="2">
    <citation type="journal article" date="2000" name="Genes Cells">
        <title>Large-scale screening of intracellular protein localization in living fission yeast cells by the use of a GFP-fusion genomic DNA library.</title>
        <authorList>
            <person name="Ding D.-Q."/>
            <person name="Tomita Y."/>
            <person name="Yamamoto A."/>
            <person name="Chikashige Y."/>
            <person name="Haraguchi T."/>
            <person name="Hiraoka Y."/>
        </authorList>
    </citation>
    <scope>NUCLEOTIDE SEQUENCE [LARGE SCALE GENOMIC DNA] OF 477-660</scope>
    <scope>SUBCELLULAR LOCATION</scope>
    <source>
        <strain>ATCC 38364 / 968</strain>
    </source>
</reference>
<reference key="3">
    <citation type="journal article" date="2006" name="Nat. Biotechnol.">
        <title>ORFeome cloning and global analysis of protein localization in the fission yeast Schizosaccharomyces pombe.</title>
        <authorList>
            <person name="Matsuyama A."/>
            <person name="Arai R."/>
            <person name="Yashiroda Y."/>
            <person name="Shirai A."/>
            <person name="Kamata A."/>
            <person name="Sekido S."/>
            <person name="Kobayashi Y."/>
            <person name="Hashimoto A."/>
            <person name="Hamamoto M."/>
            <person name="Hiraoka Y."/>
            <person name="Horinouchi S."/>
            <person name="Yoshida M."/>
        </authorList>
    </citation>
    <scope>SUBCELLULAR LOCATION [LARGE SCALE ANALYSIS]</scope>
</reference>
<reference key="4">
    <citation type="journal article" date="2013" name="EMBO J.">
        <title>The exoribonuclease Dis3L2 defines a novel eukaryotic RNA degradation pathway.</title>
        <authorList>
            <person name="Malecki M."/>
            <person name="Viegas S.C."/>
            <person name="Carneiro T."/>
            <person name="Golik P."/>
            <person name="Dressaire C."/>
            <person name="Ferreira M.G."/>
            <person name="Arraiano C.M."/>
        </authorList>
    </citation>
    <scope>FUNCTION</scope>
    <scope>SUBCELLULAR LOCATION</scope>
    <scope>MUTAGENESIS OF ASP-461</scope>
</reference>
<sequence length="927" mass="105150">MDLKPNIRRKEKRNLLKGEAALEKKGSIDRKTKNKAYPSTTHDPHQNDDSNIPGLGSGLLERIKDIVQRPTDTQLKGQDSNHKKASLTETKTEKAKVKPKAKKKNSKEKISKSSKQDEHKTDVHKESVSKLSKNLESRNNRDENSAKREKNNSHQVEADTNNATEMVSSNAKKSVYPLYYDSATVKKGLKSGTLFKGTLRILENHRSAFACMEDIPDFYVDGPIARNRAFHNDVVIVEPVMNNDSPTEKSNFLQNGVEKVKIKDHDDELGGAMEHLERLEIKSVASFKGDSRTRARVVAIEKRAEISKIVGILRAPGWSLKNVEYVSKKSSYAIFIPKDKRLPFITIHKNDLSDLSGENWIENILKHHDQLFSVEITRWSIYSRYPMGVLGEKLGNITDVEAYTNALLLENGISSSPFSDEVLNCLPPDDWIISHEEIKKRRDLRNELIITIDPETARDLDDAVSCRALDNGTYEVGVHIADVTHFVKPDSALDKEAASRATTVYLVQKAIPMLPPLLCERLCSLNPNVERLAFSVFWKLDSNGKEIGKRWFGKTVIKTCARLAYSEAQGVIEGKSWDDAVGKPIGGTHTPKDVETSILTLCEISRKLRKDRFAKGAVEINSTELKFQLDEYGMPNKCEVYEQTDANHLIEEFMLLANRSVAEHISKNFSNNSLLRRHASPKEKQINEFCHFLKSMNFDFDASSSAAFNASMVRLRSTFNEELVELFENMAVRSLNRAEYFCTGDFGEKTDWHHYALSFNHYTHFTSPIRRYPDIIVHRLLERSLKNTSPGIDKKNCSLVAAHCNEKKEKSTTVQEDSQQLFLSVYIAEYCKKHDKKSMPVQAFATRISGNSIDVYISEYGISNRVDLSSDDRIKSFIVAPDDSSVKITLFDDSQKTIALTDRFQVYLYSDYSRTFFSIRCSLVSLN</sequence>
<comment type="function">
    <text evidence="1 3">3'-5'-exoribonuclease that specifically recognizes RNAs polyuridylated at their 3' end and mediates their degradation. Component of an exosome-independent RNA degradation pathway that mediates degradation of cytoplasmic mRNAs that have been deadenylated and subsequently uridylated at their 3'.</text>
</comment>
<comment type="cofactor">
    <cofactor evidence="1">
        <name>Mg(2+)</name>
        <dbReference type="ChEBI" id="CHEBI:18420"/>
    </cofactor>
    <cofactor evidence="1">
        <name>Mn(2+)</name>
        <dbReference type="ChEBI" id="CHEBI:29035"/>
    </cofactor>
</comment>
<comment type="subcellular location">
    <subcellularLocation>
        <location evidence="3">Cytoplasm</location>
    </subcellularLocation>
    <subcellularLocation>
        <location evidence="3">Cytoplasm</location>
        <location evidence="3">P-body</location>
    </subcellularLocation>
</comment>
<comment type="similarity">
    <text evidence="1">Belongs to the RNR ribonuclease family. DIS3L2 subfamily.</text>
</comment>
<proteinExistence type="evidence at protein level"/>
<protein>
    <recommendedName>
        <fullName evidence="1">DIS3-like exonuclease 2</fullName>
        <ecNumber evidence="1">3.1.13.-</ecNumber>
    </recommendedName>
</protein>
<evidence type="ECO:0000255" key="1">
    <source>
        <dbReference type="HAMAP-Rule" id="MF_03045"/>
    </source>
</evidence>
<evidence type="ECO:0000256" key="2">
    <source>
        <dbReference type="SAM" id="MobiDB-lite"/>
    </source>
</evidence>
<evidence type="ECO:0000269" key="3">
    <source>
    </source>
</evidence>
<evidence type="ECO:0007829" key="4">
    <source>
        <dbReference type="PDB" id="4RO1"/>
    </source>
</evidence>
<keyword id="KW-0002">3D-structure</keyword>
<keyword id="KW-0963">Cytoplasm</keyword>
<keyword id="KW-0269">Exonuclease</keyword>
<keyword id="KW-0378">Hydrolase</keyword>
<keyword id="KW-0460">Magnesium</keyword>
<keyword id="KW-0464">Manganese</keyword>
<keyword id="KW-0479">Metal-binding</keyword>
<keyword id="KW-0540">Nuclease</keyword>
<keyword id="KW-1185">Reference proteome</keyword>
<keyword id="KW-0694">RNA-binding</keyword>